<protein>
    <recommendedName>
        <fullName evidence="1">Probable Fe(2+)-trafficking protein</fullName>
    </recommendedName>
</protein>
<evidence type="ECO:0000255" key="1">
    <source>
        <dbReference type="HAMAP-Rule" id="MF_00686"/>
    </source>
</evidence>
<organism>
    <name type="scientific">Neisseria gonorrhoeae (strain ATCC 700825 / FA 1090)</name>
    <dbReference type="NCBI Taxonomy" id="242231"/>
    <lineage>
        <taxon>Bacteria</taxon>
        <taxon>Pseudomonadati</taxon>
        <taxon>Pseudomonadota</taxon>
        <taxon>Betaproteobacteria</taxon>
        <taxon>Neisseriales</taxon>
        <taxon>Neisseriaceae</taxon>
        <taxon>Neisseria</taxon>
    </lineage>
</organism>
<gene>
    <name type="ordered locus">NGO_2083</name>
</gene>
<comment type="function">
    <text evidence="1">Could be a mediator in iron transactions between iron acquisition and iron-requiring processes, such as synthesis and/or repair of Fe-S clusters in biosynthetic enzymes.</text>
</comment>
<comment type="similarity">
    <text evidence="1">Belongs to the Fe(2+)-trafficking protein family.</text>
</comment>
<name>FETP_NEIG1</name>
<feature type="chain" id="PRO_0000214491" description="Probable Fe(2+)-trafficking protein">
    <location>
        <begin position="1"/>
        <end position="88"/>
    </location>
</feature>
<accession>Q5F553</accession>
<reference key="1">
    <citation type="submission" date="2003-03" db="EMBL/GenBank/DDBJ databases">
        <title>The complete genome sequence of Neisseria gonorrhoeae.</title>
        <authorList>
            <person name="Lewis L.A."/>
            <person name="Gillaspy A.F."/>
            <person name="McLaughlin R.E."/>
            <person name="Gipson M."/>
            <person name="Ducey T.F."/>
            <person name="Ownbey T."/>
            <person name="Hartman K."/>
            <person name="Nydick C."/>
            <person name="Carson M.B."/>
            <person name="Vaughn J."/>
            <person name="Thomson C."/>
            <person name="Song L."/>
            <person name="Lin S."/>
            <person name="Yuan X."/>
            <person name="Najar F."/>
            <person name="Zhan M."/>
            <person name="Ren Q."/>
            <person name="Zhu H."/>
            <person name="Qi S."/>
            <person name="Kenton S.M."/>
            <person name="Lai H."/>
            <person name="White J.D."/>
            <person name="Clifton S."/>
            <person name="Roe B.A."/>
            <person name="Dyer D.W."/>
        </authorList>
    </citation>
    <scope>NUCLEOTIDE SEQUENCE [LARGE SCALE GENOMIC DNA]</scope>
    <source>
        <strain>ATCC 700825 / FA 1090</strain>
    </source>
</reference>
<keyword id="KW-0408">Iron</keyword>
<keyword id="KW-1185">Reference proteome</keyword>
<sequence length="88" mass="10180">MARMVFCVKLNKEAEGMKFPPLPNELGKRIFENVSQEAWAAWTRHQTMLINENRLSLADPRAREYLAQQMEQYFFGDGADAVQGYVPQ</sequence>
<dbReference type="EMBL" id="AE004969">
    <property type="protein sequence ID" value="AAW90684.1"/>
    <property type="molecule type" value="Genomic_DNA"/>
</dbReference>
<dbReference type="RefSeq" id="WP_002214948.1">
    <property type="nucleotide sequence ID" value="NC_002946.2"/>
</dbReference>
<dbReference type="RefSeq" id="YP_209096.1">
    <property type="nucleotide sequence ID" value="NC_002946.2"/>
</dbReference>
<dbReference type="SMR" id="Q5F553"/>
<dbReference type="STRING" id="242231.NGO_2083"/>
<dbReference type="KEGG" id="ngo:NGO_2083"/>
<dbReference type="PATRIC" id="fig|242231.10.peg.2522"/>
<dbReference type="HOGENOM" id="CLU_170994_0_0_4"/>
<dbReference type="Proteomes" id="UP000000535">
    <property type="component" value="Chromosome"/>
</dbReference>
<dbReference type="GO" id="GO:0005829">
    <property type="term" value="C:cytosol"/>
    <property type="evidence" value="ECO:0007669"/>
    <property type="project" value="TreeGrafter"/>
</dbReference>
<dbReference type="GO" id="GO:0005506">
    <property type="term" value="F:iron ion binding"/>
    <property type="evidence" value="ECO:0007669"/>
    <property type="project" value="UniProtKB-UniRule"/>
</dbReference>
<dbReference type="GO" id="GO:0034599">
    <property type="term" value="P:cellular response to oxidative stress"/>
    <property type="evidence" value="ECO:0007669"/>
    <property type="project" value="TreeGrafter"/>
</dbReference>
<dbReference type="FunFam" id="1.10.3880.10:FF:000001">
    <property type="entry name" value="Probable Fe(2+)-trafficking protein"/>
    <property type="match status" value="1"/>
</dbReference>
<dbReference type="Gene3D" id="1.10.3880.10">
    <property type="entry name" value="Fe(II) trafficking protein YggX"/>
    <property type="match status" value="1"/>
</dbReference>
<dbReference type="HAMAP" id="MF_00686">
    <property type="entry name" value="Fe_traffic_YggX"/>
    <property type="match status" value="1"/>
</dbReference>
<dbReference type="InterPro" id="IPR007457">
    <property type="entry name" value="Fe_traffick_prot_YggX"/>
</dbReference>
<dbReference type="InterPro" id="IPR036766">
    <property type="entry name" value="Fe_traffick_prot_YggX_sf"/>
</dbReference>
<dbReference type="NCBIfam" id="NF003817">
    <property type="entry name" value="PRK05408.1"/>
    <property type="match status" value="1"/>
</dbReference>
<dbReference type="PANTHER" id="PTHR36965">
    <property type="entry name" value="FE(2+)-TRAFFICKING PROTEIN-RELATED"/>
    <property type="match status" value="1"/>
</dbReference>
<dbReference type="PANTHER" id="PTHR36965:SF1">
    <property type="entry name" value="FE(2+)-TRAFFICKING PROTEIN-RELATED"/>
    <property type="match status" value="1"/>
</dbReference>
<dbReference type="Pfam" id="PF04362">
    <property type="entry name" value="Iron_traffic"/>
    <property type="match status" value="1"/>
</dbReference>
<dbReference type="PIRSF" id="PIRSF029827">
    <property type="entry name" value="Fe_traffic_YggX"/>
    <property type="match status" value="1"/>
</dbReference>
<dbReference type="SUPFAM" id="SSF111148">
    <property type="entry name" value="YggX-like"/>
    <property type="match status" value="1"/>
</dbReference>
<proteinExistence type="inferred from homology"/>